<dbReference type="EMBL" id="CP000381">
    <property type="protein sequence ID" value="ABX73457.1"/>
    <property type="molecule type" value="Genomic_DNA"/>
</dbReference>
<dbReference type="RefSeq" id="WP_002213189.1">
    <property type="nucleotide sequence ID" value="NC_010120.1"/>
</dbReference>
<dbReference type="SMR" id="A9M021"/>
<dbReference type="KEGG" id="nmn:NMCC_1285"/>
<dbReference type="HOGENOM" id="CLU_089475_5_0_4"/>
<dbReference type="Proteomes" id="UP000001177">
    <property type="component" value="Chromosome"/>
</dbReference>
<dbReference type="GO" id="GO:0005829">
    <property type="term" value="C:cytosol"/>
    <property type="evidence" value="ECO:0007669"/>
    <property type="project" value="TreeGrafter"/>
</dbReference>
<dbReference type="GO" id="GO:0043024">
    <property type="term" value="F:ribosomal small subunit binding"/>
    <property type="evidence" value="ECO:0007669"/>
    <property type="project" value="TreeGrafter"/>
</dbReference>
<dbReference type="GO" id="GO:0030490">
    <property type="term" value="P:maturation of SSU-rRNA"/>
    <property type="evidence" value="ECO:0007669"/>
    <property type="project" value="UniProtKB-UniRule"/>
</dbReference>
<dbReference type="Gene3D" id="3.30.300.20">
    <property type="match status" value="1"/>
</dbReference>
<dbReference type="HAMAP" id="MF_00003">
    <property type="entry name" value="RbfA"/>
    <property type="match status" value="1"/>
</dbReference>
<dbReference type="InterPro" id="IPR015946">
    <property type="entry name" value="KH_dom-like_a/b"/>
</dbReference>
<dbReference type="InterPro" id="IPR000238">
    <property type="entry name" value="RbfA"/>
</dbReference>
<dbReference type="InterPro" id="IPR023799">
    <property type="entry name" value="RbfA_dom_sf"/>
</dbReference>
<dbReference type="InterPro" id="IPR020053">
    <property type="entry name" value="Ribosome-bd_factorA_CS"/>
</dbReference>
<dbReference type="NCBIfam" id="TIGR00082">
    <property type="entry name" value="rbfA"/>
    <property type="match status" value="1"/>
</dbReference>
<dbReference type="PANTHER" id="PTHR33515">
    <property type="entry name" value="RIBOSOME-BINDING FACTOR A, CHLOROPLASTIC-RELATED"/>
    <property type="match status" value="1"/>
</dbReference>
<dbReference type="PANTHER" id="PTHR33515:SF1">
    <property type="entry name" value="RIBOSOME-BINDING FACTOR A, CHLOROPLASTIC-RELATED"/>
    <property type="match status" value="1"/>
</dbReference>
<dbReference type="Pfam" id="PF02033">
    <property type="entry name" value="RBFA"/>
    <property type="match status" value="1"/>
</dbReference>
<dbReference type="SUPFAM" id="SSF89919">
    <property type="entry name" value="Ribosome-binding factor A, RbfA"/>
    <property type="match status" value="1"/>
</dbReference>
<dbReference type="PROSITE" id="PS01319">
    <property type="entry name" value="RBFA"/>
    <property type="match status" value="1"/>
</dbReference>
<gene>
    <name evidence="1" type="primary">rbfA</name>
    <name type="ordered locus">NMCC_1285</name>
</gene>
<proteinExistence type="inferred from homology"/>
<reference key="1">
    <citation type="journal article" date="2008" name="Genomics">
        <title>Characterization of ST-4821 complex, a unique Neisseria meningitidis clone.</title>
        <authorList>
            <person name="Peng J."/>
            <person name="Yang L."/>
            <person name="Yang F."/>
            <person name="Yang J."/>
            <person name="Yan Y."/>
            <person name="Nie H."/>
            <person name="Zhang X."/>
            <person name="Xiong Z."/>
            <person name="Jiang Y."/>
            <person name="Cheng F."/>
            <person name="Xu X."/>
            <person name="Chen S."/>
            <person name="Sun L."/>
            <person name="Li W."/>
            <person name="Shen Y."/>
            <person name="Shao Z."/>
            <person name="Liang X."/>
            <person name="Xu J."/>
            <person name="Jin Q."/>
        </authorList>
    </citation>
    <scope>NUCLEOTIDE SEQUENCE [LARGE SCALE GENOMIC DNA]</scope>
    <source>
        <strain>053442</strain>
    </source>
</reference>
<protein>
    <recommendedName>
        <fullName evidence="1">Ribosome-binding factor A</fullName>
    </recommendedName>
</protein>
<name>RBFA_NEIM0</name>
<accession>A9M021</accession>
<evidence type="ECO:0000255" key="1">
    <source>
        <dbReference type="HAMAP-Rule" id="MF_00003"/>
    </source>
</evidence>
<keyword id="KW-0963">Cytoplasm</keyword>
<keyword id="KW-0690">Ribosome biogenesis</keyword>
<organism>
    <name type="scientific">Neisseria meningitidis serogroup C (strain 053442)</name>
    <dbReference type="NCBI Taxonomy" id="374833"/>
    <lineage>
        <taxon>Bacteria</taxon>
        <taxon>Pseudomonadati</taxon>
        <taxon>Pseudomonadota</taxon>
        <taxon>Betaproteobacteria</taxon>
        <taxon>Neisseriales</taxon>
        <taxon>Neisseriaceae</taxon>
        <taxon>Neisseria</taxon>
    </lineage>
</organism>
<comment type="function">
    <text evidence="1">One of several proteins that assist in the late maturation steps of the functional core of the 30S ribosomal subunit. Associates with free 30S ribosomal subunits (but not with 30S subunits that are part of 70S ribosomes or polysomes). Required for efficient processing of 16S rRNA. May interact with the 5'-terminal helix region of 16S rRNA.</text>
</comment>
<comment type="subunit">
    <text evidence="1">Monomer. Binds 30S ribosomal subunits, but not 50S ribosomal subunits or 70S ribosomes.</text>
</comment>
<comment type="subcellular location">
    <subcellularLocation>
        <location evidence="1">Cytoplasm</location>
    </subcellularLocation>
</comment>
<comment type="similarity">
    <text evidence="1">Belongs to the RbfA family.</text>
</comment>
<sequence>MRKPQRGYARQDRVKEQIMRELAELVRTGLKDPRAGFITVNEVEVTRDYSHATVFYTILNQDAREITEEVLEHARGHLRSELAKRIKLFKIPELHFKYDESLERGLNLSALIDQVAAEKPVED</sequence>
<feature type="chain" id="PRO_1000073770" description="Ribosome-binding factor A">
    <location>
        <begin position="1"/>
        <end position="123"/>
    </location>
</feature>